<name>ATPK_BOVIN</name>
<dbReference type="EMBL" id="S70447">
    <property type="protein sequence ID" value="AAB31107.2"/>
    <property type="molecule type" value="mRNA"/>
</dbReference>
<dbReference type="EMBL" id="BC108208">
    <property type="protein sequence ID" value="AAI08209.1"/>
    <property type="molecule type" value="mRNA"/>
</dbReference>
<dbReference type="PIR" id="A54211">
    <property type="entry name" value="A54211"/>
</dbReference>
<dbReference type="RefSeq" id="NP_001107191.1">
    <property type="nucleotide sequence ID" value="NM_001113719.2"/>
</dbReference>
<dbReference type="PDB" id="6ZBB">
    <property type="method" value="EM"/>
    <property type="resolution" value="3.61 A"/>
    <property type="chains" value="f=2-88"/>
</dbReference>
<dbReference type="PDB" id="6ZIQ">
    <property type="method" value="EM"/>
    <property type="resolution" value="4.33 A"/>
    <property type="chains" value="f=2-88"/>
</dbReference>
<dbReference type="PDB" id="6ZIT">
    <property type="method" value="EM"/>
    <property type="resolution" value="3.49 A"/>
    <property type="chains" value="f=2-88"/>
</dbReference>
<dbReference type="PDB" id="6ZIU">
    <property type="method" value="EM"/>
    <property type="resolution" value="6.02 A"/>
    <property type="chains" value="f=2-88"/>
</dbReference>
<dbReference type="PDB" id="6ZPO">
    <property type="method" value="EM"/>
    <property type="resolution" value="4.00 A"/>
    <property type="chains" value="f=2-88"/>
</dbReference>
<dbReference type="PDB" id="6ZQM">
    <property type="method" value="EM"/>
    <property type="resolution" value="3.29 A"/>
    <property type="chains" value="f=2-88"/>
</dbReference>
<dbReference type="PDB" id="6ZQN">
    <property type="method" value="EM"/>
    <property type="resolution" value="4.00 A"/>
    <property type="chains" value="f=2-88"/>
</dbReference>
<dbReference type="PDB" id="7AJB">
    <property type="method" value="EM"/>
    <property type="resolution" value="9.20 A"/>
    <property type="chains" value="Af/f=2-88"/>
</dbReference>
<dbReference type="PDB" id="7AJC">
    <property type="method" value="EM"/>
    <property type="resolution" value="11.90 A"/>
    <property type="chains" value="Af/f=2-88"/>
</dbReference>
<dbReference type="PDB" id="7AJD">
    <property type="method" value="EM"/>
    <property type="resolution" value="9.00 A"/>
    <property type="chains" value="Af/f=2-88"/>
</dbReference>
<dbReference type="PDB" id="7AJE">
    <property type="method" value="EM"/>
    <property type="resolution" value="9.40 A"/>
    <property type="chains" value="Af/f=2-88"/>
</dbReference>
<dbReference type="PDB" id="7AJF">
    <property type="method" value="EM"/>
    <property type="resolution" value="8.45 A"/>
    <property type="chains" value="Af/f=2-88"/>
</dbReference>
<dbReference type="PDB" id="7AJG">
    <property type="method" value="EM"/>
    <property type="resolution" value="10.70 A"/>
    <property type="chains" value="Af/f=2-88"/>
</dbReference>
<dbReference type="PDB" id="7AJH">
    <property type="method" value="EM"/>
    <property type="resolution" value="9.70 A"/>
    <property type="chains" value="Af/f=2-88"/>
</dbReference>
<dbReference type="PDB" id="7AJI">
    <property type="method" value="EM"/>
    <property type="resolution" value="11.40 A"/>
    <property type="chains" value="Af/f=2-88"/>
</dbReference>
<dbReference type="PDB" id="7AJJ">
    <property type="method" value="EM"/>
    <property type="resolution" value="13.10 A"/>
    <property type="chains" value="Af/f=2-88"/>
</dbReference>
<dbReference type="PDBsum" id="6ZBB"/>
<dbReference type="PDBsum" id="6ZIQ"/>
<dbReference type="PDBsum" id="6ZIT"/>
<dbReference type="PDBsum" id="6ZIU"/>
<dbReference type="PDBsum" id="6ZPO"/>
<dbReference type="PDBsum" id="6ZQM"/>
<dbReference type="PDBsum" id="6ZQN"/>
<dbReference type="PDBsum" id="7AJB"/>
<dbReference type="PDBsum" id="7AJC"/>
<dbReference type="PDBsum" id="7AJD"/>
<dbReference type="PDBsum" id="7AJE"/>
<dbReference type="PDBsum" id="7AJF"/>
<dbReference type="PDBsum" id="7AJG"/>
<dbReference type="PDBsum" id="7AJH"/>
<dbReference type="PDBsum" id="7AJI"/>
<dbReference type="PDBsum" id="7AJJ"/>
<dbReference type="EMDB" id="EMD-11230"/>
<dbReference type="EMDB" id="EMD-11428"/>
<dbReference type="EMDB" id="EMD-11429"/>
<dbReference type="EMDB" id="EMD-11430"/>
<dbReference type="SMR" id="Q28851"/>
<dbReference type="CORUM" id="Q28851"/>
<dbReference type="FunCoup" id="Q28851">
    <property type="interactions" value="1006"/>
</dbReference>
<dbReference type="IntAct" id="Q28851">
    <property type="interactions" value="1"/>
</dbReference>
<dbReference type="MINT" id="Q28851"/>
<dbReference type="STRING" id="9913.ENSBTAP00000070013"/>
<dbReference type="GlyGen" id="Q28851">
    <property type="glycosylation" value="1 site, 1 O-linked glycan (1 site)"/>
</dbReference>
<dbReference type="PaxDb" id="9913-ENSBTAP00000041308"/>
<dbReference type="PeptideAtlas" id="Q28851"/>
<dbReference type="GeneID" id="506492"/>
<dbReference type="KEGG" id="bta:506492"/>
<dbReference type="CTD" id="9551"/>
<dbReference type="VEuPathDB" id="HostDB:ENSBTAG00000002094"/>
<dbReference type="eggNOG" id="KOG4092">
    <property type="taxonomic scope" value="Eukaryota"/>
</dbReference>
<dbReference type="HOGENOM" id="CLU_169781_0_0_1"/>
<dbReference type="InParanoid" id="Q28851"/>
<dbReference type="OMA" id="HKYVQPK"/>
<dbReference type="OrthoDB" id="8921675at2759"/>
<dbReference type="TreeFam" id="TF342865"/>
<dbReference type="Reactome" id="R-BTA-163210">
    <property type="pathway name" value="Formation of ATP by chemiosmotic coupling"/>
</dbReference>
<dbReference type="Reactome" id="R-BTA-8949613">
    <property type="pathway name" value="Cristae formation"/>
</dbReference>
<dbReference type="Proteomes" id="UP000009136">
    <property type="component" value="Chromosome 25"/>
</dbReference>
<dbReference type="Bgee" id="ENSBTAG00000002094">
    <property type="expression patterns" value="Expressed in tongue muscle and 107 other cell types or tissues"/>
</dbReference>
<dbReference type="GO" id="GO:0005743">
    <property type="term" value="C:mitochondrial inner membrane"/>
    <property type="evidence" value="ECO:0007669"/>
    <property type="project" value="UniProtKB-SubCell"/>
</dbReference>
<dbReference type="GO" id="GO:0005739">
    <property type="term" value="C:mitochondrion"/>
    <property type="evidence" value="ECO:0000305"/>
    <property type="project" value="UniProtKB"/>
</dbReference>
<dbReference type="GO" id="GO:0045259">
    <property type="term" value="C:proton-transporting ATP synthase complex"/>
    <property type="evidence" value="ECO:0000314"/>
    <property type="project" value="UniProtKB"/>
</dbReference>
<dbReference type="GO" id="GO:0042776">
    <property type="term" value="P:proton motive force-driven mitochondrial ATP synthesis"/>
    <property type="evidence" value="ECO:0000318"/>
    <property type="project" value="GO_Central"/>
</dbReference>
<dbReference type="GO" id="GO:1902600">
    <property type="term" value="P:proton transmembrane transport"/>
    <property type="evidence" value="ECO:0007669"/>
    <property type="project" value="UniProtKB-KW"/>
</dbReference>
<dbReference type="InterPro" id="IPR019344">
    <property type="entry name" value="F1F0-ATPsyn_F_prd"/>
</dbReference>
<dbReference type="PANTHER" id="PTHR13080">
    <property type="entry name" value="ATP SYNTHASE F CHAIN, MITOCHONDRIAL-RELATED"/>
    <property type="match status" value="1"/>
</dbReference>
<dbReference type="PANTHER" id="PTHR13080:SF16">
    <property type="entry name" value="ATP SYNTHASE SUBUNIT F, MITOCHONDRIAL"/>
    <property type="match status" value="1"/>
</dbReference>
<dbReference type="Pfam" id="PF10206">
    <property type="entry name" value="WRW"/>
    <property type="match status" value="1"/>
</dbReference>
<gene>
    <name evidence="3" type="primary">ATP5MF</name>
    <name type="synonym">ATP5J2</name>
</gene>
<keyword id="KW-0002">3D-structure</keyword>
<keyword id="KW-0007">Acetylation</keyword>
<keyword id="KW-0066">ATP synthesis</keyword>
<keyword id="KW-0138">CF(0)</keyword>
<keyword id="KW-0903">Direct protein sequencing</keyword>
<keyword id="KW-0375">Hydrogen ion transport</keyword>
<keyword id="KW-0406">Ion transport</keyword>
<keyword id="KW-0472">Membrane</keyword>
<keyword id="KW-0496">Mitochondrion</keyword>
<keyword id="KW-0999">Mitochondrion inner membrane</keyword>
<keyword id="KW-0597">Phosphoprotein</keyword>
<keyword id="KW-1185">Reference proteome</keyword>
<keyword id="KW-0812">Transmembrane</keyword>
<keyword id="KW-1133">Transmembrane helix</keyword>
<keyword id="KW-0813">Transport</keyword>
<protein>
    <recommendedName>
        <fullName evidence="3">ATP synthase F(0) complex subunit f, mitochondrial</fullName>
    </recommendedName>
    <alternativeName>
        <fullName evidence="8">ATP synthase membrane subunit f</fullName>
    </alternativeName>
</protein>
<reference key="1">
    <citation type="journal article" date="1994" name="Biochemistry">
        <title>F0 membrane domain of ATP synthase from bovine heart mitochondria: purification, subunit composition, and reconstitution with F1-ATPase.</title>
        <authorList>
            <person name="Collinson I.R."/>
            <person name="Runswick M.J."/>
            <person name="Buchanan S.K."/>
            <person name="Fearnley I.M."/>
            <person name="Skehel J.M."/>
            <person name="van Raaij M.J."/>
            <person name="Griffiths D.E."/>
            <person name="Walker J.E."/>
        </authorList>
    </citation>
    <scope>NUCLEOTIDE SEQUENCE [MRNA]</scope>
    <scope>PROTEIN SEQUENCE OF 2-88</scope>
    <scope>MASS SPECTROMETRY</scope>
    <source>
        <tissue>Heart</tissue>
    </source>
</reference>
<reference key="2">
    <citation type="submission" date="2005-10" db="EMBL/GenBank/DDBJ databases">
        <authorList>
            <consortium name="NIH - Mammalian Gene Collection (MGC) project"/>
        </authorList>
    </citation>
    <scope>NUCLEOTIDE SEQUENCE [LARGE SCALE MRNA]</scope>
    <source>
        <strain>Crossbred X Angus</strain>
        <tissue>Liver</tissue>
    </source>
</reference>
<reference key="3">
    <citation type="journal article" date="2007" name="FEBS Lett.">
        <title>Association of two proteolipids of unknown function with ATP synthase from bovine heart mitochondria.</title>
        <authorList>
            <person name="Chen R."/>
            <person name="Runswick M.J."/>
            <person name="Carroll J."/>
            <person name="Fearnley I.M."/>
            <person name="Walker J.E."/>
        </authorList>
    </citation>
    <scope>IDENTIFICATION IN THE ATP SYNTHASE COMPLEX</scope>
</reference>
<reference key="4">
    <citation type="journal article" date="2015" name="J. Biol. Chem.">
        <title>Organization of Subunits in the Membrane Domain of the Bovine F-ATPase Revealed by Covalent Cross-linking.</title>
        <authorList>
            <person name="Lee J."/>
            <person name="Ding S."/>
            <person name="Walpole T.B."/>
            <person name="Holding A.N."/>
            <person name="Montgomery M.G."/>
            <person name="Fearnley I.M."/>
            <person name="Walker J.E."/>
        </authorList>
    </citation>
    <scope>IDENTIFICATION BY MASS SPECTROMETRY</scope>
    <scope>IDENTIFICATION IN THE ATP SYNTHASE COMPLEX</scope>
</reference>
<proteinExistence type="evidence at protein level"/>
<sequence>MASVVPLKEKKLLEVKLGELPSWILMRDFTPSGIAGAFQRGYYRYYNKYVNVKKGSIAGLSMVLAAYVFLNYCRSYKELKHERLRKYH</sequence>
<comment type="function">
    <text evidence="2 3">Subunit f, of the mitochondrial membrane ATP synthase complex (F(1)F(0) ATP synthase or Complex V) that produces ATP from ADP in the presence of a proton gradient across the membrane which is generated by electron transport complexes of the respiratory chain. ATP synthase complex consist of a soluble F(1) head domain - the catalytic core - and a membrane F(1) domain - the membrane proton channel. These two domains are linked by a central stalk rotating inside the F(1) region and a stationary peripheral stalk. During catalysis, ATP synthesis in the catalytic domain of F(1) is coupled via a rotary mechanism of the central stalk subunits to proton translocation (By similarity). In vivo, can only synthesize ATP although its ATP hydrolase activity can be activated artificially in vitro (By similarity). Part of the complex F(0) domain (By similarity).</text>
</comment>
<comment type="subunit">
    <text evidence="3 5 6">Component of the ATP synthase complex composed at least of ATP5F1A/subunit alpha, ATP5F1B/subunit beta, ATP5MC1/subunit c (homooctomer), MT-ATP6/subunit a, MT-ATP8/subunit 8, ATP5ME/subunit e, ATP5MF/subunit f, ATP5MG/subunit g, ATP5MK/subunit k, ATP5MJ/subunit j, ATP5F1C/subunit gamma, ATP5F1D/subunit delta, ATP5F1E/subunit epsilon, ATP5PF/subunit F6, ATP5PB/subunit b, ATP5PD/subunit d, ATP5PO/subunit OSCP (PubMed:17570365, PubMed:25851905). ATP synthase complex consists of a soluble F(1) head domain (subunits alpha(3) and beta(3)) - the catalytic core - and a membrane F(0) domain - the membrane proton channel (subunits c, a, 8, e, f, g, k and j). These two domains are linked by a central stalk (subunits gamma, delta, and epsilon) rotating inside the F1 region and a stationary peripheral stalk (subunits F6, b, d, and OSCP) (By similarity).</text>
</comment>
<comment type="subcellular location">
    <subcellularLocation>
        <location>Mitochondrion</location>
    </subcellularLocation>
    <subcellularLocation>
        <location evidence="8">Mitochondrion inner membrane</location>
        <topology evidence="8">Single-pass membrane protein</topology>
    </subcellularLocation>
</comment>
<comment type="mass spectrometry"/>
<comment type="similarity">
    <text evidence="8">Belongs to the ATPase F chain family.</text>
</comment>
<organism>
    <name type="scientific">Bos taurus</name>
    <name type="common">Bovine</name>
    <dbReference type="NCBI Taxonomy" id="9913"/>
    <lineage>
        <taxon>Eukaryota</taxon>
        <taxon>Metazoa</taxon>
        <taxon>Chordata</taxon>
        <taxon>Craniata</taxon>
        <taxon>Vertebrata</taxon>
        <taxon>Euteleostomi</taxon>
        <taxon>Mammalia</taxon>
        <taxon>Eutheria</taxon>
        <taxon>Laurasiatheria</taxon>
        <taxon>Artiodactyla</taxon>
        <taxon>Ruminantia</taxon>
        <taxon>Pecora</taxon>
        <taxon>Bovidae</taxon>
        <taxon>Bovinae</taxon>
        <taxon>Bos</taxon>
    </lineage>
</organism>
<feature type="initiator methionine" description="Removed" evidence="3 7">
    <location>
        <position position="1"/>
    </location>
</feature>
<feature type="chain" id="PRO_0000194823" description="ATP synthase F(0) complex subunit f, mitochondrial">
    <location>
        <begin position="2"/>
        <end position="88"/>
    </location>
</feature>
<feature type="transmembrane region" description="Helical" evidence="3">
    <location>
        <begin position="62"/>
        <end position="79"/>
    </location>
</feature>
<feature type="modified residue" description="N-acetylalanine" evidence="3">
    <location>
        <position position="2"/>
    </location>
</feature>
<feature type="modified residue" description="Phosphoserine" evidence="1">
    <location>
        <position position="3"/>
    </location>
</feature>
<feature type="modified residue" description="N6-acetyllysine" evidence="4">
    <location>
        <position position="16"/>
    </location>
</feature>
<feature type="sequence conflict" description="In Ref. 2; AAI08209." evidence="8" ref="2">
    <original>Y</original>
    <variation>N</variation>
    <location>
        <position position="42"/>
    </location>
</feature>
<feature type="sequence conflict" description="In Ref. 2; AAI08209." evidence="8" ref="2">
    <original>L</original>
    <variation>H</variation>
    <location>
        <position position="60"/>
    </location>
</feature>
<feature type="helix" evidence="9">
    <location>
        <begin position="12"/>
        <end position="14"/>
    </location>
</feature>
<feature type="turn" evidence="9">
    <location>
        <begin position="17"/>
        <end position="19"/>
    </location>
</feature>
<feature type="helix" evidence="9">
    <location>
        <begin position="20"/>
        <end position="26"/>
    </location>
</feature>
<feature type="helix" evidence="9">
    <location>
        <begin position="31"/>
        <end position="49"/>
    </location>
</feature>
<feature type="strand" evidence="9">
    <location>
        <begin position="51"/>
        <end position="54"/>
    </location>
</feature>
<feature type="helix" evidence="9">
    <location>
        <begin position="58"/>
        <end position="80"/>
    </location>
</feature>
<accession>Q28851</accession>
<accession>Q32P94</accession>
<evidence type="ECO:0000250" key="1">
    <source>
        <dbReference type="UniProtKB" id="D3ZAF6"/>
    </source>
</evidence>
<evidence type="ECO:0000250" key="2">
    <source>
        <dbReference type="UniProtKB" id="P19483"/>
    </source>
</evidence>
<evidence type="ECO:0000250" key="3">
    <source>
        <dbReference type="UniProtKB" id="P56134"/>
    </source>
</evidence>
<evidence type="ECO:0000250" key="4">
    <source>
        <dbReference type="UniProtKB" id="P56135"/>
    </source>
</evidence>
<evidence type="ECO:0000269" key="5">
    <source>
    </source>
</evidence>
<evidence type="ECO:0000269" key="6">
    <source>
    </source>
</evidence>
<evidence type="ECO:0000269" key="7">
    <source>
    </source>
</evidence>
<evidence type="ECO:0000305" key="8"/>
<evidence type="ECO:0007829" key="9">
    <source>
        <dbReference type="PDB" id="6ZIT"/>
    </source>
</evidence>